<organism>
    <name type="scientific">Ornithorhynchus anatinus</name>
    <name type="common">Duckbill platypus</name>
    <dbReference type="NCBI Taxonomy" id="9258"/>
    <lineage>
        <taxon>Eukaryota</taxon>
        <taxon>Metazoa</taxon>
        <taxon>Chordata</taxon>
        <taxon>Craniata</taxon>
        <taxon>Vertebrata</taxon>
        <taxon>Euteleostomi</taxon>
        <taxon>Mammalia</taxon>
        <taxon>Monotremata</taxon>
        <taxon>Ornithorhynchidae</taxon>
        <taxon>Ornithorhynchus</taxon>
    </lineage>
</organism>
<reference key="1">
    <citation type="submission" date="2006-09" db="EMBL/GenBank/DDBJ databases">
        <title>NISC comparative sequencing initiative.</title>
        <authorList>
            <person name="Antonellis A."/>
            <person name="Ayele K."/>
            <person name="Benjamin B."/>
            <person name="Blakesley R.W."/>
            <person name="Boakye A."/>
            <person name="Bouffard G.G."/>
            <person name="Brinkley C."/>
            <person name="Brooks S."/>
            <person name="Chu G."/>
            <person name="Coleman H."/>
            <person name="Engle J."/>
            <person name="Gestole M."/>
            <person name="Greene A."/>
            <person name="Guan X."/>
            <person name="Gupta J."/>
            <person name="Haghighi P."/>
            <person name="Han J."/>
            <person name="Hansen N."/>
            <person name="Ho S.-L."/>
            <person name="Hu P."/>
            <person name="Hunter G."/>
            <person name="Hurle B."/>
            <person name="Idol J.R."/>
            <person name="Kwong P."/>
            <person name="Laric P."/>
            <person name="Larson S."/>
            <person name="Lee-Lin S.-Q."/>
            <person name="Legaspi R."/>
            <person name="Madden M."/>
            <person name="Maduro Q.L."/>
            <person name="Maduro V.B."/>
            <person name="Margulies E.H."/>
            <person name="Masiello C."/>
            <person name="Maskeri B."/>
            <person name="McDowell J."/>
            <person name="Mojidi H.A."/>
            <person name="Mullikin J.C."/>
            <person name="Oestreicher J.S."/>
            <person name="Park M."/>
            <person name="Portnoy M.E."/>
            <person name="Prasad A."/>
            <person name="Puri O."/>
            <person name="Reddix-Dugue N."/>
            <person name="Schandler K."/>
            <person name="Schueler M.G."/>
            <person name="Sison C."/>
            <person name="Stantripop S."/>
            <person name="Stephen E."/>
            <person name="Taye A."/>
            <person name="Thomas J.W."/>
            <person name="Thomas P.J."/>
            <person name="Tsipouri V."/>
            <person name="Ung L."/>
            <person name="Vogt J.L."/>
            <person name="Wetherby K.D."/>
            <person name="Young A."/>
            <person name="Green E.D."/>
        </authorList>
    </citation>
    <scope>NUCLEOTIDE SEQUENCE [LARGE SCALE GENOMIC DNA]</scope>
</reference>
<feature type="initiator methionine" description="Removed" evidence="4">
    <location>
        <position position="1"/>
    </location>
</feature>
<feature type="chain" id="PRO_0000260372" description="Caveolin-1">
    <location>
        <begin position="2"/>
        <end position="178"/>
    </location>
</feature>
<feature type="topological domain" description="Cytoplasmic" evidence="6">
    <location>
        <begin position="2"/>
        <end position="104"/>
    </location>
</feature>
<feature type="intramembrane region" description="Helical" evidence="6">
    <location>
        <begin position="105"/>
        <end position="125"/>
    </location>
</feature>
<feature type="topological domain" description="Cytoplasmic" evidence="6">
    <location>
        <begin position="126"/>
        <end position="178"/>
    </location>
</feature>
<feature type="region of interest" description="Required for homooligomerization" evidence="4">
    <location>
        <begin position="2"/>
        <end position="94"/>
    </location>
</feature>
<feature type="region of interest" description="Interaction with CAVIN3" evidence="4">
    <location>
        <begin position="82"/>
        <end position="94"/>
    </location>
</feature>
<feature type="region of interest" description="Interacts with SPRY1, SPRY2, SPRY3 and SPRY4" evidence="3">
    <location>
        <begin position="131"/>
        <end position="142"/>
    </location>
</feature>
<feature type="region of interest" description="Interacts with SPRY1, SPRY2, and SPRY4" evidence="3">
    <location>
        <begin position="149"/>
        <end position="160"/>
    </location>
</feature>
<feature type="region of interest" description="Interacts with SPRY1, SPRY2, SPRY3 and SPRY4" evidence="3">
    <location>
        <begin position="167"/>
        <end position="178"/>
    </location>
</feature>
<feature type="modified residue" description="N-acetylserine" evidence="4">
    <location>
        <position position="2"/>
    </location>
</feature>
<feature type="modified residue" description="Phosphoserine" evidence="2">
    <location>
        <position position="2"/>
    </location>
</feature>
<feature type="modified residue" description="N6-acetyllysine; alternate" evidence="4">
    <location>
        <position position="5"/>
    </location>
</feature>
<feature type="modified residue" description="Phosphotyrosine" evidence="4">
    <location>
        <position position="6"/>
    </location>
</feature>
<feature type="modified residue" description="Phosphotyrosine; by ABL1" evidence="3">
    <location>
        <position position="14"/>
    </location>
</feature>
<feature type="modified residue" description="Phosphotyrosine" evidence="4">
    <location>
        <position position="25"/>
    </location>
</feature>
<feature type="lipid moiety-binding region" description="S-palmitoyl cysteine" evidence="1">
    <location>
        <position position="133"/>
    </location>
</feature>
<feature type="lipid moiety-binding region" description="S-palmitoyl cysteine" evidence="1">
    <location>
        <position position="143"/>
    </location>
</feature>
<feature type="lipid moiety-binding region" description="S-palmitoyl cysteine" evidence="1">
    <location>
        <position position="156"/>
    </location>
</feature>
<feature type="cross-link" description="Glycyl lysine isopeptide (Lys-Gly) (interchain with G-Cter in ubiquitin); alternate" evidence="4">
    <location>
        <position position="5"/>
    </location>
</feature>
<feature type="cross-link" description="Glycyl lysine isopeptide (Lys-Gly) (interchain with G-Cter in ubiquitin)" evidence="4">
    <location>
        <position position="26"/>
    </location>
</feature>
<feature type="cross-link" description="Glycyl lysine isopeptide (Lys-Gly) (interchain with G-Cter in ubiquitin)" evidence="4">
    <location>
        <position position="30"/>
    </location>
</feature>
<feature type="cross-link" description="Glycyl lysine isopeptide (Lys-Gly) (interchain with G-Cter in ubiquitin)" evidence="4">
    <location>
        <position position="39"/>
    </location>
</feature>
<feature type="cross-link" description="Glycyl lysine isopeptide (Lys-Gly) (interchain with G-Cter in ubiquitin)" evidence="4">
    <location>
        <position position="47"/>
    </location>
</feature>
<feature type="cross-link" description="Glycyl lysine isopeptide (Lys-Gly) (interchain with G-Cter in ubiquitin)" evidence="4">
    <location>
        <position position="57"/>
    </location>
</feature>
<evidence type="ECO:0000250" key="1"/>
<evidence type="ECO:0000250" key="2">
    <source>
        <dbReference type="UniProtKB" id="P41350"/>
    </source>
</evidence>
<evidence type="ECO:0000250" key="3">
    <source>
        <dbReference type="UniProtKB" id="P49817"/>
    </source>
</evidence>
<evidence type="ECO:0000250" key="4">
    <source>
        <dbReference type="UniProtKB" id="Q03135"/>
    </source>
</evidence>
<evidence type="ECO:0000250" key="5">
    <source>
        <dbReference type="UniProtKB" id="Q2IBA5"/>
    </source>
</evidence>
<evidence type="ECO:0000255" key="6"/>
<evidence type="ECO:0000305" key="7"/>
<name>CAV1_ORNAN</name>
<accession>Q07E02</accession>
<protein>
    <recommendedName>
        <fullName>Caveolin-1</fullName>
    </recommendedName>
</protein>
<gene>
    <name type="primary">CAV1</name>
</gene>
<keyword id="KW-0007">Acetylation</keyword>
<keyword id="KW-1003">Cell membrane</keyword>
<keyword id="KW-0333">Golgi apparatus</keyword>
<keyword id="KW-1017">Isopeptide bond</keyword>
<keyword id="KW-0449">Lipoprotein</keyword>
<keyword id="KW-0472">Membrane</keyword>
<keyword id="KW-0564">Palmitate</keyword>
<keyword id="KW-0597">Phosphoprotein</keyword>
<keyword id="KW-1185">Reference proteome</keyword>
<keyword id="KW-0832">Ubl conjugation</keyword>
<proteinExistence type="inferred from homology"/>
<comment type="function">
    <text evidence="3 4">May act as a scaffolding protein within caveolar membranes. Forms a stable heterooligomeric complex with CAV2 that targets to lipid rafts and drives caveolae formation. Mediates the recruitment of CAVIN proteins (CAVIN1/2/3/4) to the caveolae (By similarity). Interacts directly with G-protein alpha subunits and can functionally regulate their activity (By similarity). Involved in the costimulatory signal essential for T-cell receptor (TCR)-mediated T-cell activation. Its binding to DPP4 induces T-cell proliferation and NF-kappa-B activation in a T-cell receptor/CD3-dependent manner (By similarity). Recruits CTNNB1 to caveolar membranes and may regulate CTNNB1-mediated signaling through the Wnt pathway (By similarity). Negatively regulates TGFB1-mediated activation of SMAD2/3 by mediating the internalization of TGFBR1 from membrane rafts leading to its subsequent degradation (By similarity). Binds 20(S)-hydroxycholesterol (20(S)-OHC) (By similarity).</text>
</comment>
<comment type="subunit">
    <text evidence="2 3 4 5">Homooligomer. Interacts with GLIPR2. Interacts with NOSTRIN (By similarity). Interacts with SNAP25 and STX1A (By similarity). Interacts (via the N-terminus) with DPP4; the interaction is direct (By similarity). Interacts with CTNNB1, CDH1 and JUP. Interacts with PACSIN2; this interaction induces membrane tubulation (By similarity). Interacts with SLC7A9 (By similarity). Interacts with BMX and BTK. Interacts with TGFBR1. Interacts with CAVIN3 (via leucine-zipper domain) in a cholesterol-sensitive manner. Interacts with CAVIN1. Interacts with EHD2 in a cholesterol-dependent manner. Forms a ternary complex with UBXN6 and VCP; mediates CAV1 targeting to lysosomes for degradation. Interacts with ABCG1; this interaction regulates ABCG1-mediated cholesterol efflux (By similarity). Interacts with NEU3; this interaction enhances NEU3 sialidase activity within caveola. Interacts (via C-terminus) with SPRY1, SPRY2 (via C-terminus), SPRY3, and SPRY4 (By similarity). Interacts with IGFBP5; this interaction allows trafficking of IGFBP5 from the plasma membrane to the nucleus (By similarity).</text>
</comment>
<comment type="subcellular location">
    <subcellularLocation>
        <location evidence="1">Golgi apparatus membrane</location>
        <topology evidence="1">Peripheral membrane protein</topology>
    </subcellularLocation>
    <subcellularLocation>
        <location evidence="1">Cell membrane</location>
        <topology evidence="1">Peripheral membrane protein</topology>
    </subcellularLocation>
    <subcellularLocation>
        <location evidence="3">Membrane</location>
        <location evidence="3">Caveola</location>
        <topology evidence="1">Peripheral membrane protein</topology>
    </subcellularLocation>
    <subcellularLocation>
        <location evidence="4">Membrane raft</location>
    </subcellularLocation>
    <text evidence="1">Colocalized with DPP4 in membrane rafts. Potential hairpin-like structure in the membrane. Membrane protein of caveolae (By similarity).</text>
</comment>
<comment type="PTM">
    <text evidence="4">Phosphorylated at Tyr-14 by ABL1 in response to oxidative stress.</text>
</comment>
<comment type="PTM">
    <text evidence="4">Ubiquitinated. Undergo monoubiquitination and multi- and/or polyubiquitination. Monoubiquitination of N-terminal lysines promotes integration in a ternary complex with UBXN6 and VCP which promotes oligomeric CAV1 targeting to lysosomes for degradation. Ubiquitinated by ZNRF1; leading to degradation and modulation of the TLR4-mediated immune response.</text>
</comment>
<comment type="similarity">
    <text evidence="7">Belongs to the caveolin family.</text>
</comment>
<dbReference type="EMBL" id="DP000185">
    <property type="protein sequence ID" value="ABI93674.1"/>
    <property type="molecule type" value="Genomic_DNA"/>
</dbReference>
<dbReference type="RefSeq" id="NP_001229660.1">
    <property type="nucleotide sequence ID" value="NM_001242731.1"/>
</dbReference>
<dbReference type="SMR" id="Q07E02"/>
<dbReference type="FunCoup" id="Q07E02">
    <property type="interactions" value="1677"/>
</dbReference>
<dbReference type="STRING" id="9258.ENSOANP00000023660"/>
<dbReference type="Ensembl" id="ENSOANT00000058370.1">
    <property type="protein sequence ID" value="ENSOANP00000047115.1"/>
    <property type="gene ID" value="ENSOANG00000048557.1"/>
</dbReference>
<dbReference type="GeneID" id="100079536"/>
<dbReference type="KEGG" id="oaa:100079536"/>
<dbReference type="CTD" id="857"/>
<dbReference type="eggNOG" id="ENOG502QUK5">
    <property type="taxonomic scope" value="Eukaryota"/>
</dbReference>
<dbReference type="GeneTree" id="ENSGT00950000183006"/>
<dbReference type="InParanoid" id="Q07E02"/>
<dbReference type="OrthoDB" id="5917823at2759"/>
<dbReference type="Proteomes" id="UP000002279">
    <property type="component" value="Chromosome 10"/>
</dbReference>
<dbReference type="Bgee" id="ENSOANG00000048557">
    <property type="expression patterns" value="Expressed in heart and 8 other cell types or tissues"/>
</dbReference>
<dbReference type="GO" id="GO:0005901">
    <property type="term" value="C:caveola"/>
    <property type="evidence" value="ECO:0000250"/>
    <property type="project" value="UniProtKB"/>
</dbReference>
<dbReference type="GO" id="GO:0031410">
    <property type="term" value="C:cytoplasmic vesicle"/>
    <property type="evidence" value="ECO:0000318"/>
    <property type="project" value="GO_Central"/>
</dbReference>
<dbReference type="GO" id="GO:0005768">
    <property type="term" value="C:endosome"/>
    <property type="evidence" value="ECO:0000250"/>
    <property type="project" value="UniProtKB"/>
</dbReference>
<dbReference type="GO" id="GO:0005794">
    <property type="term" value="C:Golgi apparatus"/>
    <property type="evidence" value="ECO:0000318"/>
    <property type="project" value="GO_Central"/>
</dbReference>
<dbReference type="GO" id="GO:0000139">
    <property type="term" value="C:Golgi membrane"/>
    <property type="evidence" value="ECO:0007669"/>
    <property type="project" value="UniProtKB-SubCell"/>
</dbReference>
<dbReference type="GO" id="GO:0045121">
    <property type="term" value="C:membrane raft"/>
    <property type="evidence" value="ECO:0000250"/>
    <property type="project" value="UniProtKB"/>
</dbReference>
<dbReference type="GO" id="GO:0048471">
    <property type="term" value="C:perinuclear region of cytoplasm"/>
    <property type="evidence" value="ECO:0000318"/>
    <property type="project" value="GO_Central"/>
</dbReference>
<dbReference type="GO" id="GO:0060090">
    <property type="term" value="F:molecular adaptor activity"/>
    <property type="evidence" value="ECO:0000318"/>
    <property type="project" value="GO_Central"/>
</dbReference>
<dbReference type="GO" id="GO:0008142">
    <property type="term" value="F:oxysterol binding"/>
    <property type="evidence" value="ECO:0000250"/>
    <property type="project" value="UniProtKB"/>
</dbReference>
<dbReference type="GO" id="GO:0019901">
    <property type="term" value="F:protein kinase binding"/>
    <property type="evidence" value="ECO:0000318"/>
    <property type="project" value="GO_Central"/>
</dbReference>
<dbReference type="GO" id="GO:0044325">
    <property type="term" value="F:transmembrane transporter binding"/>
    <property type="evidence" value="ECO:0000318"/>
    <property type="project" value="GO_Central"/>
</dbReference>
<dbReference type="GO" id="GO:0070836">
    <property type="term" value="P:caveola assembly"/>
    <property type="evidence" value="ECO:0000318"/>
    <property type="project" value="GO_Central"/>
</dbReference>
<dbReference type="GO" id="GO:0030154">
    <property type="term" value="P:cell differentiation"/>
    <property type="evidence" value="ECO:0000318"/>
    <property type="project" value="GO_Central"/>
</dbReference>
<dbReference type="GO" id="GO:0001937">
    <property type="term" value="P:negative regulation of endothelial cell proliferation"/>
    <property type="evidence" value="ECO:0000318"/>
    <property type="project" value="GO_Central"/>
</dbReference>
<dbReference type="GO" id="GO:0031623">
    <property type="term" value="P:receptor internalization"/>
    <property type="evidence" value="ECO:0000250"/>
    <property type="project" value="UniProtKB"/>
</dbReference>
<dbReference type="GO" id="GO:0051480">
    <property type="term" value="P:regulation of cytosolic calcium ion concentration"/>
    <property type="evidence" value="ECO:0000318"/>
    <property type="project" value="GO_Central"/>
</dbReference>
<dbReference type="GO" id="GO:0031295">
    <property type="term" value="P:T cell costimulation"/>
    <property type="evidence" value="ECO:0000250"/>
    <property type="project" value="UniProtKB"/>
</dbReference>
<dbReference type="InterPro" id="IPR001612">
    <property type="entry name" value="Caveolin"/>
</dbReference>
<dbReference type="InterPro" id="IPR018361">
    <property type="entry name" value="Caveolin_CS"/>
</dbReference>
<dbReference type="PANTHER" id="PTHR10844">
    <property type="entry name" value="CAVEOLIN"/>
    <property type="match status" value="1"/>
</dbReference>
<dbReference type="PANTHER" id="PTHR10844:SF18">
    <property type="entry name" value="CAVEOLIN-1"/>
    <property type="match status" value="1"/>
</dbReference>
<dbReference type="Pfam" id="PF01146">
    <property type="entry name" value="Caveolin"/>
    <property type="match status" value="1"/>
</dbReference>
<dbReference type="PROSITE" id="PS01210">
    <property type="entry name" value="CAVEOLIN"/>
    <property type="match status" value="1"/>
</dbReference>
<sequence length="178" mass="20380">MSGGKYVDAEGLLYSVPSRDQGNIYKPHNKTMADDLPEKQLYDAHTKEIDLVNRDPKHLNDDVVKIDFEDVIAEPEGTHSFDGIWKASFTTFTVTKYWFYRLLSALLGIPLALLWGIYFAILSFLHIWAVVPCIRSYLIEIQCISRVYSICIHTFCDPLFEAIGKVFSNIRATVQKEI</sequence>